<proteinExistence type="evidence at protein level"/>
<keyword id="KW-0204">Cytolysis</keyword>
<keyword id="KW-1061">Dermonecrotic toxin</keyword>
<keyword id="KW-0903">Direct protein sequencing</keyword>
<keyword id="KW-1015">Disulfide bond</keyword>
<keyword id="KW-0354">Hemolysis</keyword>
<keyword id="KW-0442">Lipid degradation</keyword>
<keyword id="KW-0443">Lipid metabolism</keyword>
<keyword id="KW-0456">Lyase</keyword>
<keyword id="KW-0460">Magnesium</keyword>
<keyword id="KW-0479">Metal-binding</keyword>
<keyword id="KW-0964">Secreted</keyword>
<keyword id="KW-0800">Toxin</keyword>
<comment type="function">
    <text evidence="2 4">Dermonecrotic toxins cleave the phosphodiester linkage between the phosphate and headgroup of certain phospholipids (sphingolipid and lysolipid substrates), forming an alcohol (often choline) and a cyclic phosphate (By similarity). This toxin acts on sphingomyelin (SM) (By similarity). It may also act on ceramide phosphoethanolamine (CPE), lysophosphatidylcholine (LPC) and lysophosphatidylethanolamine (LPE), but not on lysophosphatidylserine (LPS), and lysophosphatidylglycerol (LPG) (By similarity). It acts by transphosphatidylation, releasing exclusively cyclic phosphate products as second products (By similarity). Induces dermonecrosis, hemolysis, increased vascular permeability, edema, inflammatory response, and platelet aggregation (By similarity).</text>
</comment>
<comment type="catalytic activity">
    <reaction evidence="2">
        <text>an N-(acyl)-sphingosylphosphocholine = an N-(acyl)-sphingosyl-1,3-cyclic phosphate + choline</text>
        <dbReference type="Rhea" id="RHEA:60652"/>
        <dbReference type="ChEBI" id="CHEBI:15354"/>
        <dbReference type="ChEBI" id="CHEBI:64583"/>
        <dbReference type="ChEBI" id="CHEBI:143892"/>
    </reaction>
</comment>
<comment type="catalytic activity">
    <reaction evidence="2">
        <text>an N-(acyl)-sphingosylphosphoethanolamine = an N-(acyl)-sphingosyl-1,3-cyclic phosphate + ethanolamine</text>
        <dbReference type="Rhea" id="RHEA:60648"/>
        <dbReference type="ChEBI" id="CHEBI:57603"/>
        <dbReference type="ChEBI" id="CHEBI:143891"/>
        <dbReference type="ChEBI" id="CHEBI:143892"/>
    </reaction>
</comment>
<comment type="catalytic activity">
    <reaction evidence="2">
        <text>a 1-acyl-sn-glycero-3-phosphocholine = a 1-acyl-sn-glycero-2,3-cyclic phosphate + choline</text>
        <dbReference type="Rhea" id="RHEA:60700"/>
        <dbReference type="ChEBI" id="CHEBI:15354"/>
        <dbReference type="ChEBI" id="CHEBI:58168"/>
        <dbReference type="ChEBI" id="CHEBI:143947"/>
    </reaction>
</comment>
<comment type="catalytic activity">
    <reaction evidence="2">
        <text>a 1-acyl-sn-glycero-3-phosphoethanolamine = a 1-acyl-sn-glycero-2,3-cyclic phosphate + ethanolamine</text>
        <dbReference type="Rhea" id="RHEA:60704"/>
        <dbReference type="ChEBI" id="CHEBI:57603"/>
        <dbReference type="ChEBI" id="CHEBI:64381"/>
        <dbReference type="ChEBI" id="CHEBI:143947"/>
    </reaction>
</comment>
<comment type="cofactor">
    <cofactor evidence="6">
        <name>Mg(2+)</name>
        <dbReference type="ChEBI" id="CHEBI:18420"/>
    </cofactor>
    <text evidence="6">Binds 1 Mg(2+) ion per subunit.</text>
</comment>
<comment type="subcellular location">
    <subcellularLocation>
        <location evidence="7">Secreted</location>
    </subcellularLocation>
</comment>
<comment type="tissue specificity">
    <text evidence="9">Expressed by the venom gland.</text>
</comment>
<comment type="PTM">
    <text evidence="1">Contains 2 disulfide bonds.</text>
</comment>
<comment type="similarity">
    <text evidence="8">Belongs to the arthropod phospholipase D family. Class II subfamily.</text>
</comment>
<comment type="caution">
    <text evidence="2 3 5">The most common activity assay for dermonecrotic toxins detects enzymatic activity by monitoring choline release from substrate. Liberation of choline from sphingomyelin (SM) or lysophosphatidylcholine (LPC) is commonly assumed to result from substrate hydrolysis, giving either ceramide-1-phosphate (C1P) or lysophosphatidic acid (LPA), respectively, as a second product. However, two studies from Lajoie and colleagues (2013 and 2015) report the observation of exclusive formation of cyclic phosphate products as second products, resulting from intramolecular transphosphatidylation. Cyclic phosphates have vastly different biological properties from their monoester counterparts, and they may be relevant to the pathology of brown spider envenomation.</text>
</comment>
<evidence type="ECO:0000250" key="1"/>
<evidence type="ECO:0000250" key="2">
    <source>
        <dbReference type="UniProtKB" id="A0A0D4WTV1"/>
    </source>
</evidence>
<evidence type="ECO:0000250" key="3">
    <source>
        <dbReference type="UniProtKB" id="A0A0D4WV12"/>
    </source>
</evidence>
<evidence type="ECO:0000250" key="4">
    <source>
        <dbReference type="UniProtKB" id="P0CE80"/>
    </source>
</evidence>
<evidence type="ECO:0000250" key="5">
    <source>
        <dbReference type="UniProtKB" id="Q4ZFU2"/>
    </source>
</evidence>
<evidence type="ECO:0000250" key="6">
    <source>
        <dbReference type="UniProtKB" id="Q8I914"/>
    </source>
</evidence>
<evidence type="ECO:0000269" key="7">
    <source>
    </source>
</evidence>
<evidence type="ECO:0000305" key="8"/>
<evidence type="ECO:0000305" key="9">
    <source>
    </source>
</evidence>
<reference key="1">
    <citation type="journal article" date="2005" name="Proteomics">
        <title>Proteome analysis of brown spider venom: identification of loxnecrogin isoforms in Loxosceles gaucho venom.</title>
        <authorList>
            <person name="Machado L.F."/>
            <person name="Laugesen S."/>
            <person name="Botelho E.D."/>
            <person name="Ricart C.A.O."/>
            <person name="Fontes W."/>
            <person name="Barbaro K.C."/>
            <person name="Roepstorff P."/>
            <person name="Sousa M.V."/>
        </authorList>
    </citation>
    <scope>PROTEIN SEQUENCE</scope>
    <scope>SUBCELLULAR LOCATION</scope>
    <source>
        <tissue>Venom</tissue>
    </source>
</reference>
<accession>P0C2K4</accession>
<dbReference type="EC" id="4.6.1.-" evidence="5"/>
<dbReference type="ArachnoServer" id="AS000149">
    <property type="toxin name" value="Sphingomyelinase D (LOXN2) (N-terminal fragment)"/>
</dbReference>
<dbReference type="GO" id="GO:0005576">
    <property type="term" value="C:extracellular region"/>
    <property type="evidence" value="ECO:0007669"/>
    <property type="project" value="UniProtKB-SubCell"/>
</dbReference>
<dbReference type="GO" id="GO:0016829">
    <property type="term" value="F:lyase activity"/>
    <property type="evidence" value="ECO:0007669"/>
    <property type="project" value="UniProtKB-KW"/>
</dbReference>
<dbReference type="GO" id="GO:0046872">
    <property type="term" value="F:metal ion binding"/>
    <property type="evidence" value="ECO:0007669"/>
    <property type="project" value="UniProtKB-KW"/>
</dbReference>
<dbReference type="GO" id="GO:0090729">
    <property type="term" value="F:toxin activity"/>
    <property type="evidence" value="ECO:0007669"/>
    <property type="project" value="UniProtKB-KW"/>
</dbReference>
<dbReference type="GO" id="GO:0031640">
    <property type="term" value="P:killing of cells of another organism"/>
    <property type="evidence" value="ECO:0007669"/>
    <property type="project" value="UniProtKB-KW"/>
</dbReference>
<dbReference type="GO" id="GO:0016042">
    <property type="term" value="P:lipid catabolic process"/>
    <property type="evidence" value="ECO:0007669"/>
    <property type="project" value="UniProtKB-KW"/>
</dbReference>
<organism>
    <name type="scientific">Loxosceles gaucho</name>
    <name type="common">Spider</name>
    <dbReference type="NCBI Taxonomy" id="58216"/>
    <lineage>
        <taxon>Eukaryota</taxon>
        <taxon>Metazoa</taxon>
        <taxon>Ecdysozoa</taxon>
        <taxon>Arthropoda</taxon>
        <taxon>Chelicerata</taxon>
        <taxon>Arachnida</taxon>
        <taxon>Araneae</taxon>
        <taxon>Araneomorphae</taxon>
        <taxon>Haplogynae</taxon>
        <taxon>Scytodoidea</taxon>
        <taxon>Sicariidae</taxon>
        <taxon>Loxosceles</taxon>
    </lineage>
</organism>
<feature type="chain" id="PRO_0000279561" description="Dermonecrotic toxin LgSicTox-beta-LOXN2">
    <location>
        <begin position="1"/>
        <end position="36" status="greater than"/>
    </location>
</feature>
<feature type="non-consecutive residues" evidence="8">
    <location>
        <begin position="10"/>
        <end position="11"/>
    </location>
</feature>
<feature type="non-consecutive residues" evidence="8">
    <location>
        <begin position="21"/>
        <end position="22"/>
    </location>
</feature>
<feature type="non-terminal residue">
    <location>
        <position position="36"/>
    </location>
</feature>
<name>BX2_LOXGA</name>
<protein>
    <recommendedName>
        <fullName>Dermonecrotic toxin LgSicTox-beta-LOXN2</fullName>
        <ecNumber evidence="5">4.6.1.-</ecNumber>
    </recommendedName>
    <alternativeName>
        <fullName>Phospholipase D</fullName>
        <shortName>PLD</shortName>
    </alternativeName>
    <alternativeName>
        <fullName>Sphingomyelin phosphodiesterase D</fullName>
        <shortName>SMD</shortName>
        <shortName>SMase D</shortName>
        <shortName>Sphingomyelinase D</shortName>
    </alternativeName>
</protein>
<sequence length="36" mass="4198">VDKRRPIWVMLLSSYWQDGNSLGVDAIMTNYPEDVK</sequence>